<gene>
    <name evidence="1" type="primary">ihfB</name>
    <name evidence="1" type="synonym">himD</name>
    <name type="ordered locus">ECDH10B_0982</name>
</gene>
<reference key="1">
    <citation type="journal article" date="2008" name="J. Bacteriol.">
        <title>The complete genome sequence of Escherichia coli DH10B: insights into the biology of a laboratory workhorse.</title>
        <authorList>
            <person name="Durfee T."/>
            <person name="Nelson R."/>
            <person name="Baldwin S."/>
            <person name="Plunkett G. III"/>
            <person name="Burland V."/>
            <person name="Mau B."/>
            <person name="Petrosino J.F."/>
            <person name="Qin X."/>
            <person name="Muzny D.M."/>
            <person name="Ayele M."/>
            <person name="Gibbs R.A."/>
            <person name="Csorgo B."/>
            <person name="Posfai G."/>
            <person name="Weinstock G.M."/>
            <person name="Blattner F.R."/>
        </authorList>
    </citation>
    <scope>NUCLEOTIDE SEQUENCE [LARGE SCALE GENOMIC DNA]</scope>
    <source>
        <strain>K12 / DH10B</strain>
    </source>
</reference>
<keyword id="KW-0233">DNA recombination</keyword>
<keyword id="KW-0238">DNA-binding</keyword>
<keyword id="KW-0804">Transcription</keyword>
<keyword id="KW-0805">Transcription regulation</keyword>
<keyword id="KW-0810">Translation regulation</keyword>
<accession>B1X852</accession>
<proteinExistence type="inferred from homology"/>
<name>IHFB_ECODH</name>
<feature type="chain" id="PRO_1000122213" description="Integration host factor subunit beta">
    <location>
        <begin position="1"/>
        <end position="94"/>
    </location>
</feature>
<protein>
    <recommendedName>
        <fullName evidence="1">Integration host factor subunit beta</fullName>
        <shortName evidence="1">IHF-beta</shortName>
    </recommendedName>
</protein>
<evidence type="ECO:0000255" key="1">
    <source>
        <dbReference type="HAMAP-Rule" id="MF_00381"/>
    </source>
</evidence>
<sequence>MTKSELIERLATQQSHIPAKTVEDAVKEMLEHMASTLAQGERIEIRGFGSFSLHYRAPRTGRNPKTGDKVELEGKYVPHFKPGKELRDRANIYG</sequence>
<organism>
    <name type="scientific">Escherichia coli (strain K12 / DH10B)</name>
    <dbReference type="NCBI Taxonomy" id="316385"/>
    <lineage>
        <taxon>Bacteria</taxon>
        <taxon>Pseudomonadati</taxon>
        <taxon>Pseudomonadota</taxon>
        <taxon>Gammaproteobacteria</taxon>
        <taxon>Enterobacterales</taxon>
        <taxon>Enterobacteriaceae</taxon>
        <taxon>Escherichia</taxon>
    </lineage>
</organism>
<comment type="function">
    <text evidence="1">This protein is one of the two subunits of integration host factor, a specific DNA-binding protein that functions in genetic recombination as well as in transcriptional and translational control.</text>
</comment>
<comment type="subunit">
    <text evidence="1">Heterodimer of an alpha and a beta chain.</text>
</comment>
<comment type="similarity">
    <text evidence="1">Belongs to the bacterial histone-like protein family.</text>
</comment>
<dbReference type="EMBL" id="CP000948">
    <property type="protein sequence ID" value="ACB02112.1"/>
    <property type="molecule type" value="Genomic_DNA"/>
</dbReference>
<dbReference type="RefSeq" id="WP_000167336.1">
    <property type="nucleotide sequence ID" value="NC_010473.1"/>
</dbReference>
<dbReference type="SMR" id="B1X852"/>
<dbReference type="GeneID" id="93776505"/>
<dbReference type="KEGG" id="ecd:ECDH10B_0982"/>
<dbReference type="HOGENOM" id="CLU_105066_2_0_6"/>
<dbReference type="GO" id="GO:0005694">
    <property type="term" value="C:chromosome"/>
    <property type="evidence" value="ECO:0007669"/>
    <property type="project" value="InterPro"/>
</dbReference>
<dbReference type="GO" id="GO:0005829">
    <property type="term" value="C:cytosol"/>
    <property type="evidence" value="ECO:0007669"/>
    <property type="project" value="TreeGrafter"/>
</dbReference>
<dbReference type="GO" id="GO:0003677">
    <property type="term" value="F:DNA binding"/>
    <property type="evidence" value="ECO:0007669"/>
    <property type="project" value="UniProtKB-UniRule"/>
</dbReference>
<dbReference type="GO" id="GO:0030527">
    <property type="term" value="F:structural constituent of chromatin"/>
    <property type="evidence" value="ECO:0007669"/>
    <property type="project" value="InterPro"/>
</dbReference>
<dbReference type="GO" id="GO:0006310">
    <property type="term" value="P:DNA recombination"/>
    <property type="evidence" value="ECO:0007669"/>
    <property type="project" value="UniProtKB-UniRule"/>
</dbReference>
<dbReference type="GO" id="GO:0006355">
    <property type="term" value="P:regulation of DNA-templated transcription"/>
    <property type="evidence" value="ECO:0007669"/>
    <property type="project" value="UniProtKB-UniRule"/>
</dbReference>
<dbReference type="GO" id="GO:0006417">
    <property type="term" value="P:regulation of translation"/>
    <property type="evidence" value="ECO:0007669"/>
    <property type="project" value="UniProtKB-UniRule"/>
</dbReference>
<dbReference type="CDD" id="cd13836">
    <property type="entry name" value="IHF_B"/>
    <property type="match status" value="1"/>
</dbReference>
<dbReference type="FunFam" id="4.10.520.10:FF:000003">
    <property type="entry name" value="Integration host factor subunit beta"/>
    <property type="match status" value="1"/>
</dbReference>
<dbReference type="Gene3D" id="4.10.520.10">
    <property type="entry name" value="IHF-like DNA-binding proteins"/>
    <property type="match status" value="1"/>
</dbReference>
<dbReference type="HAMAP" id="MF_00381">
    <property type="entry name" value="IHF_beta"/>
    <property type="match status" value="1"/>
</dbReference>
<dbReference type="InterPro" id="IPR000119">
    <property type="entry name" value="Hist_DNA-bd"/>
</dbReference>
<dbReference type="InterPro" id="IPR020816">
    <property type="entry name" value="Histone-like_DNA-bd_CS"/>
</dbReference>
<dbReference type="InterPro" id="IPR010992">
    <property type="entry name" value="IHF-like_DNA-bd_dom_sf"/>
</dbReference>
<dbReference type="InterPro" id="IPR005685">
    <property type="entry name" value="IHF_beta"/>
</dbReference>
<dbReference type="NCBIfam" id="TIGR00988">
    <property type="entry name" value="hip"/>
    <property type="match status" value="1"/>
</dbReference>
<dbReference type="NCBIfam" id="NF001222">
    <property type="entry name" value="PRK00199.1"/>
    <property type="match status" value="1"/>
</dbReference>
<dbReference type="PANTHER" id="PTHR33175">
    <property type="entry name" value="DNA-BINDING PROTEIN HU"/>
    <property type="match status" value="1"/>
</dbReference>
<dbReference type="PANTHER" id="PTHR33175:SF5">
    <property type="entry name" value="INTEGRATION HOST FACTOR SUBUNIT BETA"/>
    <property type="match status" value="1"/>
</dbReference>
<dbReference type="Pfam" id="PF00216">
    <property type="entry name" value="Bac_DNA_binding"/>
    <property type="match status" value="1"/>
</dbReference>
<dbReference type="PRINTS" id="PR01727">
    <property type="entry name" value="DNABINDINGHU"/>
</dbReference>
<dbReference type="SMART" id="SM00411">
    <property type="entry name" value="BHL"/>
    <property type="match status" value="1"/>
</dbReference>
<dbReference type="SUPFAM" id="SSF47729">
    <property type="entry name" value="IHF-like DNA-binding proteins"/>
    <property type="match status" value="1"/>
</dbReference>
<dbReference type="PROSITE" id="PS00045">
    <property type="entry name" value="HISTONE_LIKE"/>
    <property type="match status" value="1"/>
</dbReference>